<keyword id="KW-0903">Direct protein sequencing</keyword>
<keyword id="KW-1015">Disulfide bond</keyword>
<keyword id="KW-0646">Protease inhibitor</keyword>
<keyword id="KW-1185">Reference proteome</keyword>
<keyword id="KW-0722">Serine protease inhibitor</keyword>
<feature type="chain" id="PRO_0000105858" description="Bowman-Birk type proteinase inhibitor I-2B">
    <location>
        <begin position="1" status="less than"/>
        <end position="56" status="greater than"/>
    </location>
</feature>
<feature type="site" description="Reactive bond" evidence="1">
    <location>
        <begin position="17"/>
        <end position="18"/>
    </location>
</feature>
<feature type="site" description="Reactive bond" evidence="1">
    <location>
        <begin position="43"/>
        <end position="44"/>
    </location>
</feature>
<feature type="disulfide bond" evidence="2">
    <location>
        <begin position="10"/>
        <end position="25"/>
    </location>
</feature>
<feature type="disulfide bond" evidence="2">
    <location>
        <begin position="15"/>
        <end position="23"/>
    </location>
</feature>
<feature type="disulfide bond" evidence="2">
    <location>
        <begin position="32"/>
        <end position="39"/>
    </location>
</feature>
<feature type="disulfide bond" evidence="2">
    <location>
        <begin position="36"/>
        <end position="51"/>
    </location>
</feature>
<feature type="non-terminal residue">
    <location>
        <position position="1"/>
    </location>
</feature>
<feature type="non-terminal residue">
    <location>
        <position position="56"/>
    </location>
</feature>
<accession>P09863</accession>
<sequence>AAKKRPWKCCDQAVCTRSIPPICRCMDQVFECPSTCKACGPSVGDPSRRVCQDQYV</sequence>
<comment type="similarity">
    <text evidence="3">Belongs to the Bowman-Birk serine protease inhibitor family.</text>
</comment>
<evidence type="ECO:0000250" key="1"/>
<evidence type="ECO:0000250" key="2">
    <source>
        <dbReference type="UniProtKB" id="P80321"/>
    </source>
</evidence>
<evidence type="ECO:0000305" key="3"/>
<protein>
    <recommendedName>
        <fullName>Bowman-Birk type proteinase inhibitor I-2B</fullName>
    </recommendedName>
</protein>
<name>IBB1_WHEAT</name>
<proteinExistence type="evidence at protein level"/>
<reference key="1">
    <citation type="journal article" date="1986" name="J. Biochem.">
        <title>Wheat germ trypsin inhibitors. Isolation and structural characterization of single-headed and double-headed inhibitors of the Bowman-Birk type.</title>
        <authorList>
            <person name="Odani S."/>
            <person name="Koide T."/>
            <person name="Ono T."/>
        </authorList>
    </citation>
    <scope>PROTEIN SEQUENCE</scope>
</reference>
<organism>
    <name type="scientific">Triticum aestivum</name>
    <name type="common">Wheat</name>
    <dbReference type="NCBI Taxonomy" id="4565"/>
    <lineage>
        <taxon>Eukaryota</taxon>
        <taxon>Viridiplantae</taxon>
        <taxon>Streptophyta</taxon>
        <taxon>Embryophyta</taxon>
        <taxon>Tracheophyta</taxon>
        <taxon>Spermatophyta</taxon>
        <taxon>Magnoliopsida</taxon>
        <taxon>Liliopsida</taxon>
        <taxon>Poales</taxon>
        <taxon>Poaceae</taxon>
        <taxon>BOP clade</taxon>
        <taxon>Pooideae</taxon>
        <taxon>Triticodae</taxon>
        <taxon>Triticeae</taxon>
        <taxon>Triticinae</taxon>
        <taxon>Triticum</taxon>
    </lineage>
</organism>
<dbReference type="PIR" id="A25507">
    <property type="entry name" value="A25507"/>
</dbReference>
<dbReference type="SMR" id="P09863"/>
<dbReference type="STRING" id="4565.P09863"/>
<dbReference type="MEROPS" id="I12.009"/>
<dbReference type="Proteomes" id="UP000019116">
    <property type="component" value="Unplaced"/>
</dbReference>
<dbReference type="ExpressionAtlas" id="P09863">
    <property type="expression patterns" value="baseline and differential"/>
</dbReference>
<dbReference type="GO" id="GO:0005576">
    <property type="term" value="C:extracellular region"/>
    <property type="evidence" value="ECO:0007669"/>
    <property type="project" value="InterPro"/>
</dbReference>
<dbReference type="GO" id="GO:0004867">
    <property type="term" value="F:serine-type endopeptidase inhibitor activity"/>
    <property type="evidence" value="ECO:0007669"/>
    <property type="project" value="UniProtKB-KW"/>
</dbReference>
<dbReference type="CDD" id="cd00023">
    <property type="entry name" value="BBI"/>
    <property type="match status" value="1"/>
</dbReference>
<dbReference type="Gene3D" id="2.10.69.10">
    <property type="entry name" value="Cysteine Protease (Bromelain) Inhibitor, subunit H"/>
    <property type="match status" value="1"/>
</dbReference>
<dbReference type="InterPro" id="IPR035995">
    <property type="entry name" value="Bowman-Birk_prot_inh"/>
</dbReference>
<dbReference type="InterPro" id="IPR000877">
    <property type="entry name" value="Prot_inh_BBI"/>
</dbReference>
<dbReference type="PANTHER" id="PTHR33479:SF11">
    <property type="entry name" value="BOWMAN-BIRK SERINE PROTEASE INHIBITORS FAMILY DOMAIN-CONTAINING PROTEIN"/>
    <property type="match status" value="1"/>
</dbReference>
<dbReference type="PANTHER" id="PTHR33479">
    <property type="entry name" value="BOWMAN-BIRK TYPE BRAN TRYPSIN INHIBITOR"/>
    <property type="match status" value="1"/>
</dbReference>
<dbReference type="Pfam" id="PF00228">
    <property type="entry name" value="Bowman-Birk_leg"/>
    <property type="match status" value="1"/>
</dbReference>
<dbReference type="SMART" id="SM00269">
    <property type="entry name" value="BowB"/>
    <property type="match status" value="1"/>
</dbReference>
<dbReference type="SUPFAM" id="SSF57247">
    <property type="entry name" value="Bowman-Birk inhibitor, BBI"/>
    <property type="match status" value="1"/>
</dbReference>
<dbReference type="PROSITE" id="PS00281">
    <property type="entry name" value="BOWMAN_BIRK"/>
    <property type="match status" value="1"/>
</dbReference>